<reference key="1">
    <citation type="submission" date="2007-02" db="EMBL/GenBank/DDBJ databases">
        <title>Complete sequence of chromosome of Shewanella baltica OS155.</title>
        <authorList>
            <consortium name="US DOE Joint Genome Institute"/>
            <person name="Copeland A."/>
            <person name="Lucas S."/>
            <person name="Lapidus A."/>
            <person name="Barry K."/>
            <person name="Detter J.C."/>
            <person name="Glavina del Rio T."/>
            <person name="Hammon N."/>
            <person name="Israni S."/>
            <person name="Dalin E."/>
            <person name="Tice H."/>
            <person name="Pitluck S."/>
            <person name="Sims D.R."/>
            <person name="Brettin T."/>
            <person name="Bruce D."/>
            <person name="Han C."/>
            <person name="Tapia R."/>
            <person name="Brainard J."/>
            <person name="Schmutz J."/>
            <person name="Larimer F."/>
            <person name="Land M."/>
            <person name="Hauser L."/>
            <person name="Kyrpides N."/>
            <person name="Mikhailova N."/>
            <person name="Brettar I."/>
            <person name="Klappenbach J."/>
            <person name="Konstantinidis K."/>
            <person name="Rodrigues J."/>
            <person name="Tiedje J."/>
            <person name="Richardson P."/>
        </authorList>
    </citation>
    <scope>NUCLEOTIDE SEQUENCE [LARGE SCALE GENOMIC DNA]</scope>
    <source>
        <strain>OS155 / ATCC BAA-1091</strain>
    </source>
</reference>
<keyword id="KW-0328">Glycosyltransferase</keyword>
<keyword id="KW-1185">Reference proteome</keyword>
<keyword id="KW-0808">Transferase</keyword>
<sequence>MATPHINAVEGAFAETMLFPGDPLRAKYIAETFLENVEQVTDVRNMLGFTGTYKGKRISVMGSGMGIPSCSIYATELIRDYGVKNLIRVGTCGAISTDVKVRDVIIGMGACTDSAVNRLRFKGQDFAAIANYELMNAVIESAKVRGTKVRVGNIFSADLFYTPDPQMFDVMEKMGVLGVEMEAAGLYGVAHEFGARALCVVTVSDHIRTGEKTSAEERQTTFNDMIIMTLEAAITL</sequence>
<evidence type="ECO:0000250" key="1">
    <source>
        <dbReference type="UniProtKB" id="P50389"/>
    </source>
</evidence>
<evidence type="ECO:0000255" key="2">
    <source>
        <dbReference type="HAMAP-Rule" id="MF_01627"/>
    </source>
</evidence>
<organism>
    <name type="scientific">Shewanella baltica (strain OS155 / ATCC BAA-1091)</name>
    <dbReference type="NCBI Taxonomy" id="325240"/>
    <lineage>
        <taxon>Bacteria</taxon>
        <taxon>Pseudomonadati</taxon>
        <taxon>Pseudomonadota</taxon>
        <taxon>Gammaproteobacteria</taxon>
        <taxon>Alteromonadales</taxon>
        <taxon>Shewanellaceae</taxon>
        <taxon>Shewanella</taxon>
    </lineage>
</organism>
<comment type="function">
    <text evidence="2">Catalyzes the reversible phosphorolytic breakdown of the N-glycosidic bond in the beta-(deoxy)ribonucleoside molecules, with the formation of the corresponding free purine bases and pentose-1-phosphate.</text>
</comment>
<comment type="catalytic activity">
    <reaction evidence="2">
        <text>a purine D-ribonucleoside + phosphate = a purine nucleobase + alpha-D-ribose 1-phosphate</text>
        <dbReference type="Rhea" id="RHEA:19805"/>
        <dbReference type="ChEBI" id="CHEBI:26386"/>
        <dbReference type="ChEBI" id="CHEBI:43474"/>
        <dbReference type="ChEBI" id="CHEBI:57720"/>
        <dbReference type="ChEBI" id="CHEBI:142355"/>
        <dbReference type="EC" id="2.4.2.1"/>
    </reaction>
</comment>
<comment type="catalytic activity">
    <reaction evidence="2">
        <text>a purine 2'-deoxy-D-ribonucleoside + phosphate = a purine nucleobase + 2-deoxy-alpha-D-ribose 1-phosphate</text>
        <dbReference type="Rhea" id="RHEA:36431"/>
        <dbReference type="ChEBI" id="CHEBI:26386"/>
        <dbReference type="ChEBI" id="CHEBI:43474"/>
        <dbReference type="ChEBI" id="CHEBI:57259"/>
        <dbReference type="ChEBI" id="CHEBI:142361"/>
        <dbReference type="EC" id="2.4.2.1"/>
    </reaction>
</comment>
<comment type="subunit">
    <text evidence="2">Homohexamer; trimer of homodimers.</text>
</comment>
<comment type="similarity">
    <text evidence="2">Belongs to the PNP/UDP phosphorylase family.</text>
</comment>
<dbReference type="EC" id="2.4.2.1" evidence="2"/>
<dbReference type="EMBL" id="CP000563">
    <property type="protein sequence ID" value="ABN62704.1"/>
    <property type="molecule type" value="Genomic_DNA"/>
</dbReference>
<dbReference type="RefSeq" id="WP_006086929.1">
    <property type="nucleotide sequence ID" value="NC_009052.1"/>
</dbReference>
<dbReference type="SMR" id="A3D7J1"/>
<dbReference type="STRING" id="325240.Sbal_3224"/>
<dbReference type="GeneID" id="11773408"/>
<dbReference type="KEGG" id="sbl:Sbal_3224"/>
<dbReference type="HOGENOM" id="CLU_068457_2_0_6"/>
<dbReference type="OrthoDB" id="9782889at2"/>
<dbReference type="Proteomes" id="UP000001557">
    <property type="component" value="Chromosome"/>
</dbReference>
<dbReference type="GO" id="GO:0005829">
    <property type="term" value="C:cytosol"/>
    <property type="evidence" value="ECO:0007669"/>
    <property type="project" value="TreeGrafter"/>
</dbReference>
<dbReference type="GO" id="GO:0004731">
    <property type="term" value="F:purine-nucleoside phosphorylase activity"/>
    <property type="evidence" value="ECO:0007669"/>
    <property type="project" value="UniProtKB-UniRule"/>
</dbReference>
<dbReference type="GO" id="GO:0006152">
    <property type="term" value="P:purine nucleoside catabolic process"/>
    <property type="evidence" value="ECO:0007669"/>
    <property type="project" value="TreeGrafter"/>
</dbReference>
<dbReference type="CDD" id="cd09006">
    <property type="entry name" value="PNP_EcPNPI-like"/>
    <property type="match status" value="1"/>
</dbReference>
<dbReference type="Gene3D" id="3.40.50.1580">
    <property type="entry name" value="Nucleoside phosphorylase domain"/>
    <property type="match status" value="1"/>
</dbReference>
<dbReference type="HAMAP" id="MF_01627">
    <property type="entry name" value="Pur_nucleosid_phosp"/>
    <property type="match status" value="1"/>
</dbReference>
<dbReference type="InterPro" id="IPR004402">
    <property type="entry name" value="DeoD-type"/>
</dbReference>
<dbReference type="InterPro" id="IPR018016">
    <property type="entry name" value="Nucleoside_phosphorylase_CS"/>
</dbReference>
<dbReference type="InterPro" id="IPR000845">
    <property type="entry name" value="Nucleoside_phosphorylase_d"/>
</dbReference>
<dbReference type="InterPro" id="IPR035994">
    <property type="entry name" value="Nucleoside_phosphorylase_sf"/>
</dbReference>
<dbReference type="NCBIfam" id="TIGR00107">
    <property type="entry name" value="deoD"/>
    <property type="match status" value="1"/>
</dbReference>
<dbReference type="NCBIfam" id="NF004489">
    <property type="entry name" value="PRK05819.1"/>
    <property type="match status" value="1"/>
</dbReference>
<dbReference type="NCBIfam" id="NF009914">
    <property type="entry name" value="PRK13374.1"/>
    <property type="match status" value="1"/>
</dbReference>
<dbReference type="PANTHER" id="PTHR43691:SF2">
    <property type="entry name" value="PURINE NUCLEOSIDE PHOSPHORYLASE DEOD-TYPE"/>
    <property type="match status" value="1"/>
</dbReference>
<dbReference type="PANTHER" id="PTHR43691">
    <property type="entry name" value="URIDINE PHOSPHORYLASE"/>
    <property type="match status" value="1"/>
</dbReference>
<dbReference type="Pfam" id="PF01048">
    <property type="entry name" value="PNP_UDP_1"/>
    <property type="match status" value="1"/>
</dbReference>
<dbReference type="SUPFAM" id="SSF53167">
    <property type="entry name" value="Purine and uridine phosphorylases"/>
    <property type="match status" value="1"/>
</dbReference>
<dbReference type="PROSITE" id="PS01232">
    <property type="entry name" value="PNP_UDP_1"/>
    <property type="match status" value="1"/>
</dbReference>
<feature type="chain" id="PRO_1000069641" description="Purine nucleoside phosphorylase DeoD-type">
    <location>
        <begin position="1"/>
        <end position="236"/>
    </location>
</feature>
<feature type="active site" description="Proton donor" evidence="2">
    <location>
        <position position="205"/>
    </location>
</feature>
<feature type="binding site" evidence="1">
    <location>
        <position position="5"/>
    </location>
    <ligand>
        <name>a purine D-ribonucleoside</name>
        <dbReference type="ChEBI" id="CHEBI:142355"/>
        <note>ligand shared between dimeric partners</note>
    </ligand>
</feature>
<feature type="binding site" description="in other chain" evidence="1">
    <location>
        <position position="21"/>
    </location>
    <ligand>
        <name>phosphate</name>
        <dbReference type="ChEBI" id="CHEBI:43474"/>
        <note>ligand shared between dimeric partners</note>
    </ligand>
</feature>
<feature type="binding site" description="in other chain" evidence="1">
    <location>
        <position position="25"/>
    </location>
    <ligand>
        <name>phosphate</name>
        <dbReference type="ChEBI" id="CHEBI:43474"/>
        <note>ligand shared between dimeric partners</note>
    </ligand>
</feature>
<feature type="binding site" evidence="1">
    <location>
        <position position="44"/>
    </location>
    <ligand>
        <name>phosphate</name>
        <dbReference type="ChEBI" id="CHEBI:43474"/>
        <note>ligand shared between dimeric partners</note>
    </ligand>
</feature>
<feature type="binding site" description="in other chain" evidence="1">
    <location>
        <begin position="88"/>
        <end position="91"/>
    </location>
    <ligand>
        <name>phosphate</name>
        <dbReference type="ChEBI" id="CHEBI:43474"/>
        <note>ligand shared between dimeric partners</note>
    </ligand>
</feature>
<feature type="binding site" description="in other chain" evidence="1">
    <location>
        <begin position="180"/>
        <end position="182"/>
    </location>
    <ligand>
        <name>a purine D-ribonucleoside</name>
        <dbReference type="ChEBI" id="CHEBI:142355"/>
        <note>ligand shared between dimeric partners</note>
    </ligand>
</feature>
<feature type="binding site" description="in other chain" evidence="1">
    <location>
        <begin position="204"/>
        <end position="205"/>
    </location>
    <ligand>
        <name>a purine D-ribonucleoside</name>
        <dbReference type="ChEBI" id="CHEBI:142355"/>
        <note>ligand shared between dimeric partners</note>
    </ligand>
</feature>
<feature type="site" description="Important for catalytic activity" evidence="2">
    <location>
        <position position="218"/>
    </location>
</feature>
<gene>
    <name evidence="2" type="primary">deoD</name>
    <name type="ordered locus">Sbal_3224</name>
</gene>
<accession>A3D7J1</accession>
<proteinExistence type="inferred from homology"/>
<protein>
    <recommendedName>
        <fullName evidence="2">Purine nucleoside phosphorylase DeoD-type</fullName>
        <shortName evidence="2">PNP</shortName>
        <ecNumber evidence="2">2.4.2.1</ecNumber>
    </recommendedName>
</protein>
<name>DEOD_SHEB5</name>